<feature type="chain" id="PRO_1000014850" description="Large ribosomal subunit protein bL9">
    <location>
        <begin position="1"/>
        <end position="171"/>
    </location>
</feature>
<name>RL9_RICCK</name>
<dbReference type="EMBL" id="CP000409">
    <property type="protein sequence ID" value="ABV72992.1"/>
    <property type="molecule type" value="Genomic_DNA"/>
</dbReference>
<dbReference type="RefSeq" id="WP_012148193.1">
    <property type="nucleotide sequence ID" value="NC_009879.1"/>
</dbReference>
<dbReference type="SMR" id="A8EXA9"/>
<dbReference type="STRING" id="293613.A1E_00195"/>
<dbReference type="KEGG" id="rcm:A1E_00195"/>
<dbReference type="eggNOG" id="COG0359">
    <property type="taxonomic scope" value="Bacteria"/>
</dbReference>
<dbReference type="HOGENOM" id="CLU_078938_1_0_5"/>
<dbReference type="Proteomes" id="UP000007056">
    <property type="component" value="Chromosome"/>
</dbReference>
<dbReference type="GO" id="GO:1990904">
    <property type="term" value="C:ribonucleoprotein complex"/>
    <property type="evidence" value="ECO:0007669"/>
    <property type="project" value="UniProtKB-KW"/>
</dbReference>
<dbReference type="GO" id="GO:0005840">
    <property type="term" value="C:ribosome"/>
    <property type="evidence" value="ECO:0007669"/>
    <property type="project" value="UniProtKB-KW"/>
</dbReference>
<dbReference type="GO" id="GO:0019843">
    <property type="term" value="F:rRNA binding"/>
    <property type="evidence" value="ECO:0007669"/>
    <property type="project" value="UniProtKB-UniRule"/>
</dbReference>
<dbReference type="GO" id="GO:0003735">
    <property type="term" value="F:structural constituent of ribosome"/>
    <property type="evidence" value="ECO:0007669"/>
    <property type="project" value="InterPro"/>
</dbReference>
<dbReference type="GO" id="GO:0006412">
    <property type="term" value="P:translation"/>
    <property type="evidence" value="ECO:0007669"/>
    <property type="project" value="UniProtKB-UniRule"/>
</dbReference>
<dbReference type="Gene3D" id="3.10.430.100">
    <property type="entry name" value="Ribosomal protein L9, C-terminal domain"/>
    <property type="match status" value="1"/>
</dbReference>
<dbReference type="Gene3D" id="3.40.5.10">
    <property type="entry name" value="Ribosomal protein L9, N-terminal domain"/>
    <property type="match status" value="1"/>
</dbReference>
<dbReference type="HAMAP" id="MF_00503">
    <property type="entry name" value="Ribosomal_bL9"/>
    <property type="match status" value="1"/>
</dbReference>
<dbReference type="InterPro" id="IPR000244">
    <property type="entry name" value="Ribosomal_bL9"/>
</dbReference>
<dbReference type="InterPro" id="IPR009027">
    <property type="entry name" value="Ribosomal_bL9/RNase_H1_N"/>
</dbReference>
<dbReference type="InterPro" id="IPR020594">
    <property type="entry name" value="Ribosomal_bL9_bac/chp"/>
</dbReference>
<dbReference type="InterPro" id="IPR020069">
    <property type="entry name" value="Ribosomal_bL9_C"/>
</dbReference>
<dbReference type="InterPro" id="IPR036791">
    <property type="entry name" value="Ribosomal_bL9_C_sf"/>
</dbReference>
<dbReference type="InterPro" id="IPR020070">
    <property type="entry name" value="Ribosomal_bL9_N"/>
</dbReference>
<dbReference type="InterPro" id="IPR036935">
    <property type="entry name" value="Ribosomal_bL9_N_sf"/>
</dbReference>
<dbReference type="NCBIfam" id="TIGR00158">
    <property type="entry name" value="L9"/>
    <property type="match status" value="1"/>
</dbReference>
<dbReference type="PANTHER" id="PTHR21368">
    <property type="entry name" value="50S RIBOSOMAL PROTEIN L9"/>
    <property type="match status" value="1"/>
</dbReference>
<dbReference type="Pfam" id="PF03948">
    <property type="entry name" value="Ribosomal_L9_C"/>
    <property type="match status" value="1"/>
</dbReference>
<dbReference type="Pfam" id="PF01281">
    <property type="entry name" value="Ribosomal_L9_N"/>
    <property type="match status" value="1"/>
</dbReference>
<dbReference type="SUPFAM" id="SSF55658">
    <property type="entry name" value="L9 N-domain-like"/>
    <property type="match status" value="1"/>
</dbReference>
<dbReference type="SUPFAM" id="SSF55653">
    <property type="entry name" value="Ribosomal protein L9 C-domain"/>
    <property type="match status" value="1"/>
</dbReference>
<dbReference type="PROSITE" id="PS00651">
    <property type="entry name" value="RIBOSOMAL_L9"/>
    <property type="match status" value="1"/>
</dbReference>
<gene>
    <name evidence="1" type="primary">rplI</name>
    <name type="ordered locus">A1E_00195</name>
</gene>
<accession>A8EXA9</accession>
<sequence length="171" mass="19502">MEIILIKPVRKLGKIGDILKVADGFGRNYLLPQKLAIRATEPNKELIVKQKHEFEAKDKQIREEVEKINALIKEQKLVFIRQTSDDGKLFGSITNKEIADKLSENVSYNIFHSNIILDKKIKSTGIYTVEIRLHAELNAIVTVIVARSESEVQDYLREQKNESLETLAESA</sequence>
<protein>
    <recommendedName>
        <fullName evidence="1">Large ribosomal subunit protein bL9</fullName>
    </recommendedName>
    <alternativeName>
        <fullName evidence="2">50S ribosomal protein L9</fullName>
    </alternativeName>
</protein>
<proteinExistence type="inferred from homology"/>
<organism>
    <name type="scientific">Rickettsia canadensis (strain McKiel)</name>
    <dbReference type="NCBI Taxonomy" id="293613"/>
    <lineage>
        <taxon>Bacteria</taxon>
        <taxon>Pseudomonadati</taxon>
        <taxon>Pseudomonadota</taxon>
        <taxon>Alphaproteobacteria</taxon>
        <taxon>Rickettsiales</taxon>
        <taxon>Rickettsiaceae</taxon>
        <taxon>Rickettsieae</taxon>
        <taxon>Rickettsia</taxon>
        <taxon>belli group</taxon>
    </lineage>
</organism>
<evidence type="ECO:0000255" key="1">
    <source>
        <dbReference type="HAMAP-Rule" id="MF_00503"/>
    </source>
</evidence>
<evidence type="ECO:0000305" key="2"/>
<keyword id="KW-0687">Ribonucleoprotein</keyword>
<keyword id="KW-0689">Ribosomal protein</keyword>
<keyword id="KW-0694">RNA-binding</keyword>
<keyword id="KW-0699">rRNA-binding</keyword>
<comment type="function">
    <text evidence="1">Binds to the 23S rRNA.</text>
</comment>
<comment type="similarity">
    <text evidence="1">Belongs to the bacterial ribosomal protein bL9 family.</text>
</comment>
<reference key="1">
    <citation type="submission" date="2007-09" db="EMBL/GenBank/DDBJ databases">
        <title>Complete genome sequence of Rickettsia canadensis.</title>
        <authorList>
            <person name="Madan A."/>
            <person name="Fahey J."/>
            <person name="Helton E."/>
            <person name="Ketteman M."/>
            <person name="Madan A."/>
            <person name="Rodrigues S."/>
            <person name="Sanchez A."/>
            <person name="Whiting M."/>
            <person name="Dasch G."/>
            <person name="Eremeeva M."/>
        </authorList>
    </citation>
    <scope>NUCLEOTIDE SEQUENCE [LARGE SCALE GENOMIC DNA]</scope>
    <source>
        <strain>McKiel</strain>
    </source>
</reference>